<organism>
    <name type="scientific">Mycobacterium tuberculosis (strain CDC 1551 / Oshkosh)</name>
    <dbReference type="NCBI Taxonomy" id="83331"/>
    <lineage>
        <taxon>Bacteria</taxon>
        <taxon>Bacillati</taxon>
        <taxon>Actinomycetota</taxon>
        <taxon>Actinomycetes</taxon>
        <taxon>Mycobacteriales</taxon>
        <taxon>Mycobacteriaceae</taxon>
        <taxon>Mycobacterium</taxon>
        <taxon>Mycobacterium tuberculosis complex</taxon>
    </lineage>
</organism>
<proteinExistence type="inferred from homology"/>
<name>LPRI_MYCTO</name>
<protein>
    <recommendedName>
        <fullName evidence="1">Lipoprotein LprI</fullName>
    </recommendedName>
    <alternativeName>
        <fullName>Glycolipoprotein LprI</fullName>
    </alternativeName>
    <alternativeName>
        <fullName>Lysozyme inhibitor LprI</fullName>
    </alternativeName>
</protein>
<reference key="1">
    <citation type="journal article" date="2002" name="J. Bacteriol.">
        <title>Whole-genome comparison of Mycobacterium tuberculosis clinical and laboratory strains.</title>
        <authorList>
            <person name="Fleischmann R.D."/>
            <person name="Alland D."/>
            <person name="Eisen J.A."/>
            <person name="Carpenter L."/>
            <person name="White O."/>
            <person name="Peterson J.D."/>
            <person name="DeBoy R.T."/>
            <person name="Dodson R.J."/>
            <person name="Gwinn M.L."/>
            <person name="Haft D.H."/>
            <person name="Hickey E.K."/>
            <person name="Kolonay J.F."/>
            <person name="Nelson W.C."/>
            <person name="Umayam L.A."/>
            <person name="Ermolaeva M.D."/>
            <person name="Salzberg S.L."/>
            <person name="Delcher A."/>
            <person name="Utterback T.R."/>
            <person name="Weidman J.F."/>
            <person name="Khouri H.M."/>
            <person name="Gill J."/>
            <person name="Mikula A."/>
            <person name="Bishai W."/>
            <person name="Jacobs W.R. Jr."/>
            <person name="Venter J.C."/>
            <person name="Fraser C.M."/>
        </authorList>
    </citation>
    <scope>NUCLEOTIDE SEQUENCE [LARGE SCALE GENOMIC DNA]</scope>
    <source>
        <strain>CDC 1551 / Oshkosh</strain>
    </source>
</reference>
<accession>P9WK40</accession>
<accession>L0T8K2</accession>
<accession>P65318</accession>
<accession>Q10785</accession>
<dbReference type="EMBL" id="AE000516">
    <property type="protein sequence ID" value="AAK45859.1"/>
    <property type="molecule type" value="Genomic_DNA"/>
</dbReference>
<dbReference type="PIR" id="B70761">
    <property type="entry name" value="B70761"/>
</dbReference>
<dbReference type="RefSeq" id="WP_003407725.1">
    <property type="nucleotide sequence ID" value="NZ_KK341227.1"/>
</dbReference>
<dbReference type="SMR" id="P9WK40"/>
<dbReference type="KEGG" id="mtc:MT1593"/>
<dbReference type="PATRIC" id="fig|83331.31.peg.1714"/>
<dbReference type="HOGENOM" id="CLU_098273_0_0_11"/>
<dbReference type="Proteomes" id="UP000001020">
    <property type="component" value="Chromosome"/>
</dbReference>
<dbReference type="GO" id="GO:0009986">
    <property type="term" value="C:cell surface"/>
    <property type="evidence" value="ECO:0007669"/>
    <property type="project" value="UniProtKB-SubCell"/>
</dbReference>
<dbReference type="GO" id="GO:0005576">
    <property type="term" value="C:extracellular region"/>
    <property type="evidence" value="ECO:0007669"/>
    <property type="project" value="UniProtKB-KW"/>
</dbReference>
<dbReference type="GO" id="GO:0005886">
    <property type="term" value="C:plasma membrane"/>
    <property type="evidence" value="ECO:0007669"/>
    <property type="project" value="UniProtKB-SubCell"/>
</dbReference>
<dbReference type="Gene3D" id="1.20.1270.180">
    <property type="match status" value="1"/>
</dbReference>
<dbReference type="Gene3D" id="2.40.128.200">
    <property type="match status" value="1"/>
</dbReference>
<dbReference type="InterPro" id="IPR009739">
    <property type="entry name" value="LprI-like_N"/>
</dbReference>
<dbReference type="InterPro" id="IPR052755">
    <property type="entry name" value="Lysozyme_Inhibitor_LprI"/>
</dbReference>
<dbReference type="InterPro" id="IPR018660">
    <property type="entry name" value="MliC"/>
</dbReference>
<dbReference type="InterPro" id="IPR036328">
    <property type="entry name" value="MliC_sf"/>
</dbReference>
<dbReference type="PANTHER" id="PTHR37549">
    <property type="entry name" value="LIPOPROTEIN LPRI"/>
    <property type="match status" value="1"/>
</dbReference>
<dbReference type="PANTHER" id="PTHR37549:SF1">
    <property type="entry name" value="LIPOPROTEIN LPRI"/>
    <property type="match status" value="1"/>
</dbReference>
<dbReference type="Pfam" id="PF07007">
    <property type="entry name" value="LprI"/>
    <property type="match status" value="1"/>
</dbReference>
<dbReference type="Pfam" id="PF09864">
    <property type="entry name" value="MliC"/>
    <property type="match status" value="1"/>
</dbReference>
<dbReference type="SUPFAM" id="SSF141488">
    <property type="entry name" value="YdhA-like"/>
    <property type="match status" value="1"/>
</dbReference>
<dbReference type="PROSITE" id="PS51257">
    <property type="entry name" value="PROKAR_LIPOPROTEIN"/>
    <property type="match status" value="1"/>
</dbReference>
<evidence type="ECO:0000250" key="1">
    <source>
        <dbReference type="UniProtKB" id="P9WK41"/>
    </source>
</evidence>
<evidence type="ECO:0000255" key="2">
    <source>
        <dbReference type="PROSITE-ProRule" id="PRU00303"/>
    </source>
</evidence>
<evidence type="ECO:0000305" key="3"/>
<sequence>MRWIGVLVTALVLSACAANPPANTTSPTAGQSLDCTKPATIVQQLVCHDRQLTSLDHRLSTAYQQALAHRRSAALEAAQSSWTMLRDACAQDTDPRTCVQEAYQTRLVQLAIADPATATPPVLTYRCPTQDGPLTAQFYNQFDPKTAVLNWKGDQVIVFVELSGSGARYGRQGIEYWEHQGEVRLDFHGATFVCRTS</sequence>
<gene>
    <name type="primary">lprI</name>
    <name type="ordered locus">MT1593</name>
</gene>
<comment type="function">
    <text evidence="1">Strongly binds and inhibits lysozyme, may help bacteria survive in lysozyme-producing host cells such as monocyte-derived macrophages.</text>
</comment>
<comment type="subunit">
    <text evidence="1">Probably a homodimer.</text>
</comment>
<comment type="subcellular location">
    <subcellularLocation>
        <location evidence="2">Cell membrane</location>
        <topology evidence="2">Lipid-anchor</topology>
    </subcellularLocation>
    <subcellularLocation>
        <location evidence="1">Secreted</location>
        <location evidence="1">Cell wall</location>
    </subcellularLocation>
    <subcellularLocation>
        <location evidence="1">Cell surface</location>
    </subcellularLocation>
</comment>
<comment type="PTM">
    <text evidence="1">Glycosylated.</text>
</comment>
<comment type="similarity">
    <text evidence="3">In the C-terminal section; belongs to the MliC family.</text>
</comment>
<keyword id="KW-1003">Cell membrane</keyword>
<keyword id="KW-0134">Cell wall</keyword>
<keyword id="KW-0325">Glycoprotein</keyword>
<keyword id="KW-0449">Lipoprotein</keyword>
<keyword id="KW-0472">Membrane</keyword>
<keyword id="KW-0564">Palmitate</keyword>
<keyword id="KW-1185">Reference proteome</keyword>
<keyword id="KW-0964">Secreted</keyword>
<keyword id="KW-0732">Signal</keyword>
<feature type="signal peptide" evidence="2">
    <location>
        <begin position="1"/>
        <end position="15"/>
    </location>
</feature>
<feature type="chain" id="PRO_0000427720" description="Lipoprotein LprI">
    <location>
        <begin position="16"/>
        <end position="197"/>
    </location>
</feature>
<feature type="lipid moiety-binding region" description="N-palmitoyl cysteine" evidence="2">
    <location>
        <position position="16"/>
    </location>
</feature>
<feature type="lipid moiety-binding region" description="S-diacylglycerol cysteine" evidence="2">
    <location>
        <position position="16"/>
    </location>
</feature>